<protein>
    <recommendedName>
        <fullName evidence="1">Pole-localizer protein TmaR</fullName>
    </recommendedName>
</protein>
<keyword id="KW-0175">Coiled coil</keyword>
<keyword id="KW-0963">Cytoplasm</keyword>
<dbReference type="EMBL" id="FM178380">
    <property type="protein sequence ID" value="CAQ81357.1"/>
    <property type="molecule type" value="Genomic_DNA"/>
</dbReference>
<dbReference type="RefSeq" id="WP_012551925.1">
    <property type="nucleotide sequence ID" value="NC_011313.1"/>
</dbReference>
<dbReference type="SMR" id="B6ERM4"/>
<dbReference type="KEGG" id="vsa:VSAL_II0603"/>
<dbReference type="eggNOG" id="COG2926">
    <property type="taxonomic scope" value="Bacteria"/>
</dbReference>
<dbReference type="HOGENOM" id="CLU_153146_0_0_6"/>
<dbReference type="Proteomes" id="UP000001730">
    <property type="component" value="Chromosome 2"/>
</dbReference>
<dbReference type="GO" id="GO:0005829">
    <property type="term" value="C:cytosol"/>
    <property type="evidence" value="ECO:0007669"/>
    <property type="project" value="TreeGrafter"/>
</dbReference>
<dbReference type="HAMAP" id="MF_00683">
    <property type="entry name" value="Pole_loc_TmaR"/>
    <property type="match status" value="1"/>
</dbReference>
<dbReference type="InterPro" id="IPR007458">
    <property type="entry name" value="DUF496"/>
</dbReference>
<dbReference type="NCBIfam" id="NF003844">
    <property type="entry name" value="PRK05423.1"/>
    <property type="match status" value="1"/>
</dbReference>
<dbReference type="PANTHER" id="PTHR39591">
    <property type="entry name" value="UPF0265 PROTEIN YEEX"/>
    <property type="match status" value="1"/>
</dbReference>
<dbReference type="PANTHER" id="PTHR39591:SF1">
    <property type="entry name" value="UPF0265 PROTEIN YEEX"/>
    <property type="match status" value="1"/>
</dbReference>
<dbReference type="Pfam" id="PF04363">
    <property type="entry name" value="DUF496"/>
    <property type="match status" value="1"/>
</dbReference>
<dbReference type="PIRSF" id="PIRSF028773">
    <property type="entry name" value="UCP028773"/>
    <property type="match status" value="1"/>
</dbReference>
<evidence type="ECO:0000255" key="1">
    <source>
        <dbReference type="HAMAP-Rule" id="MF_00683"/>
    </source>
</evidence>
<proteinExistence type="inferred from homology"/>
<gene>
    <name evidence="1" type="primary">tmaR</name>
    <name type="ordered locus">VSAL_II0603</name>
</gene>
<name>TMAR_ALISL</name>
<accession>B6ERM4</accession>
<feature type="chain" id="PRO_1000147737" description="Pole-localizer protein TmaR">
    <location>
        <begin position="1"/>
        <end position="102"/>
    </location>
</feature>
<feature type="coiled-coil region" evidence="1">
    <location>
        <begin position="7"/>
        <end position="34"/>
    </location>
</feature>
<comment type="function">
    <text evidence="1">Pole-localizer protein involved in the regulation of several cellular processes.</text>
</comment>
<comment type="subcellular location">
    <subcellularLocation>
        <location evidence="1">Cytoplasm</location>
    </subcellularLocation>
</comment>
<comment type="similarity">
    <text evidence="1">Belongs to the pole-localizer TmaR family.</text>
</comment>
<reference key="1">
    <citation type="journal article" date="2008" name="BMC Genomics">
        <title>The genome sequence of the fish pathogen Aliivibrio salmonicida strain LFI1238 shows extensive evidence of gene decay.</title>
        <authorList>
            <person name="Hjerde E."/>
            <person name="Lorentzen M.S."/>
            <person name="Holden M.T."/>
            <person name="Seeger K."/>
            <person name="Paulsen S."/>
            <person name="Bason N."/>
            <person name="Churcher C."/>
            <person name="Harris D."/>
            <person name="Norbertczak H."/>
            <person name="Quail M.A."/>
            <person name="Sanders S."/>
            <person name="Thurston S."/>
            <person name="Parkhill J."/>
            <person name="Willassen N.P."/>
            <person name="Thomson N.R."/>
        </authorList>
    </citation>
    <scope>NUCLEOTIDE SEQUENCE [LARGE SCALE GENOMIC DNA]</scope>
    <source>
        <strain>LFI1238</strain>
    </source>
</reference>
<organism>
    <name type="scientific">Aliivibrio salmonicida (strain LFI1238)</name>
    <name type="common">Vibrio salmonicida (strain LFI1238)</name>
    <dbReference type="NCBI Taxonomy" id="316275"/>
    <lineage>
        <taxon>Bacteria</taxon>
        <taxon>Pseudomonadati</taxon>
        <taxon>Pseudomonadota</taxon>
        <taxon>Gammaproteobacteria</taxon>
        <taxon>Vibrionales</taxon>
        <taxon>Vibrionaceae</taxon>
        <taxon>Aliivibrio</taxon>
    </lineage>
</organism>
<sequence>MNNVFEIINQARRKNKLKRELQDNQKKIRDNQKRVVLLENMLDYIDPSMTTAEVITIVQNMKGDYEDRVDDHIIKSAEISKSRRDISRKIRDLTEADKKANK</sequence>